<reference key="1">
    <citation type="journal article" date="2006" name="BMC Genomics">
        <title>The genome of the square archaeon Haloquadratum walsbyi: life at the limits of water activity.</title>
        <authorList>
            <person name="Bolhuis H."/>
            <person name="Palm P."/>
            <person name="Wende A."/>
            <person name="Falb M."/>
            <person name="Rampp M."/>
            <person name="Rodriguez-Valera F."/>
            <person name="Pfeiffer F."/>
            <person name="Oesterhelt D."/>
        </authorList>
    </citation>
    <scope>NUCLEOTIDE SEQUENCE [LARGE SCALE GENOMIC DNA]</scope>
    <source>
        <strain>DSM 16790 / HBSQ001</strain>
    </source>
</reference>
<accession>Q18GK0</accession>
<keyword id="KW-0028">Amino-acid biosynthesis</keyword>
<keyword id="KW-0963">Cytoplasm</keyword>
<keyword id="KW-0554">One-carbon metabolism</keyword>
<keyword id="KW-0663">Pyridoxal phosphate</keyword>
<keyword id="KW-1185">Reference proteome</keyword>
<keyword id="KW-0808">Transferase</keyword>
<sequence>MERSHIRDVDPDAADALSSERQRQEDTLAMIASENHVSEAVLEAQGSALTNKYAEGYPGERYYAGCEYADEIESLAIERAEELWGAEHVNVQPHSGTQANMAVYLTALDPGDKILSLDLTHGGHLSHGHPANFTGQTYTVEQYEVDPETGYIDYEGLKTKADEFNPDIIVSGYSAYPREVEFERIQEAADLADAYHLADIAHITGLVAAGVHTSPVGVADFVTGSTHKTIRAGRGGIIMCNEEHADDIDNSVFPGAQGGPLMHNVAGKAVGFKEALSDEFEAYAEQTVKNAEELANTLTDAGLSVVSGGTDNHLVLVDLRPSHPETTGKEVEAALESAGIIMNANTVPGETRSAFNPSGIRVGTPALTTRGFTESTVREVGELMIELIDDPTDDEAIAAVSDRVDTLTDEYPLYR</sequence>
<gene>
    <name evidence="1" type="primary">glyA</name>
    <name type="ordered locus">HQ_2791A</name>
</gene>
<evidence type="ECO:0000255" key="1">
    <source>
        <dbReference type="HAMAP-Rule" id="MF_00051"/>
    </source>
</evidence>
<evidence type="ECO:0000256" key="2">
    <source>
        <dbReference type="SAM" id="MobiDB-lite"/>
    </source>
</evidence>
<feature type="chain" id="PRO_0000369967" description="Serine hydroxymethyltransferase">
    <location>
        <begin position="1"/>
        <end position="415"/>
    </location>
</feature>
<feature type="region of interest" description="Disordered" evidence="2">
    <location>
        <begin position="1"/>
        <end position="21"/>
    </location>
</feature>
<feature type="compositionally biased region" description="Basic and acidic residues" evidence="2">
    <location>
        <begin position="1"/>
        <end position="10"/>
    </location>
</feature>
<feature type="binding site" evidence="1">
    <location>
        <position position="119"/>
    </location>
    <ligand>
        <name>(6S)-5,6,7,8-tetrahydrofolate</name>
        <dbReference type="ChEBI" id="CHEBI:57453"/>
    </ligand>
</feature>
<feature type="binding site" evidence="1">
    <location>
        <begin position="123"/>
        <end position="125"/>
    </location>
    <ligand>
        <name>(6S)-5,6,7,8-tetrahydrofolate</name>
        <dbReference type="ChEBI" id="CHEBI:57453"/>
    </ligand>
</feature>
<feature type="binding site" evidence="1">
    <location>
        <begin position="353"/>
        <end position="355"/>
    </location>
    <ligand>
        <name>(6S)-5,6,7,8-tetrahydrofolate</name>
        <dbReference type="ChEBI" id="CHEBI:57453"/>
    </ligand>
</feature>
<feature type="site" description="Plays an important role in substrate specificity" evidence="1">
    <location>
        <position position="227"/>
    </location>
</feature>
<feature type="modified residue" description="N6-(pyridoxal phosphate)lysine" evidence="1">
    <location>
        <position position="228"/>
    </location>
</feature>
<proteinExistence type="inferred from homology"/>
<comment type="function">
    <text evidence="1">Catalyzes the reversible interconversion of serine and glycine with tetrahydrofolate (THF) serving as the one-carbon carrier. Also exhibits THF-independent aldolase activity toward beta-hydroxyamino acids, producing glycine and aldehydes, via a retro-aldol mechanism.</text>
</comment>
<comment type="catalytic activity">
    <reaction evidence="1">
        <text>(6R)-5,10-methylene-5,6,7,8-tetrahydrofolate + glycine + H2O = (6S)-5,6,7,8-tetrahydrofolate + L-serine</text>
        <dbReference type="Rhea" id="RHEA:15481"/>
        <dbReference type="ChEBI" id="CHEBI:15377"/>
        <dbReference type="ChEBI" id="CHEBI:15636"/>
        <dbReference type="ChEBI" id="CHEBI:33384"/>
        <dbReference type="ChEBI" id="CHEBI:57305"/>
        <dbReference type="ChEBI" id="CHEBI:57453"/>
        <dbReference type="EC" id="2.1.2.1"/>
    </reaction>
</comment>
<comment type="cofactor">
    <cofactor evidence="1">
        <name>pyridoxal 5'-phosphate</name>
        <dbReference type="ChEBI" id="CHEBI:597326"/>
    </cofactor>
</comment>
<comment type="pathway">
    <text evidence="1">One-carbon metabolism; tetrahydrofolate interconversion.</text>
</comment>
<comment type="pathway">
    <text evidence="1">Amino-acid biosynthesis; glycine biosynthesis; glycine from L-serine: step 1/1.</text>
</comment>
<comment type="subunit">
    <text evidence="1">Homodimer.</text>
</comment>
<comment type="subcellular location">
    <subcellularLocation>
        <location evidence="1">Cytoplasm</location>
    </subcellularLocation>
</comment>
<comment type="similarity">
    <text evidence="1">Belongs to the SHMT family.</text>
</comment>
<name>GLYA_HALWD</name>
<organism>
    <name type="scientific">Haloquadratum walsbyi (strain DSM 16790 / HBSQ001)</name>
    <dbReference type="NCBI Taxonomy" id="362976"/>
    <lineage>
        <taxon>Archaea</taxon>
        <taxon>Methanobacteriati</taxon>
        <taxon>Methanobacteriota</taxon>
        <taxon>Stenosarchaea group</taxon>
        <taxon>Halobacteria</taxon>
        <taxon>Halobacteriales</taxon>
        <taxon>Haloferacaceae</taxon>
        <taxon>Haloquadratum</taxon>
    </lineage>
</organism>
<protein>
    <recommendedName>
        <fullName evidence="1">Serine hydroxymethyltransferase</fullName>
        <shortName evidence="1">SHMT</shortName>
        <shortName evidence="1">Serine methylase</shortName>
        <ecNumber evidence="1">2.1.2.1</ecNumber>
    </recommendedName>
</protein>
<dbReference type="EC" id="2.1.2.1" evidence="1"/>
<dbReference type="EMBL" id="AM180088">
    <property type="protein sequence ID" value="CAJ52898.1"/>
    <property type="molecule type" value="Genomic_DNA"/>
</dbReference>
<dbReference type="RefSeq" id="WP_011572011.1">
    <property type="nucleotide sequence ID" value="NC_008212.1"/>
</dbReference>
<dbReference type="SMR" id="Q18GK0"/>
<dbReference type="STRING" id="362976.HQ_2791A"/>
<dbReference type="GeneID" id="4194048"/>
<dbReference type="KEGG" id="hwa:HQ_2791A"/>
<dbReference type="eggNOG" id="arCOG00070">
    <property type="taxonomic scope" value="Archaea"/>
</dbReference>
<dbReference type="HOGENOM" id="CLU_022477_2_1_2"/>
<dbReference type="UniPathway" id="UPA00193"/>
<dbReference type="UniPathway" id="UPA00288">
    <property type="reaction ID" value="UER01023"/>
</dbReference>
<dbReference type="Proteomes" id="UP000001975">
    <property type="component" value="Chromosome"/>
</dbReference>
<dbReference type="GO" id="GO:0005737">
    <property type="term" value="C:cytoplasm"/>
    <property type="evidence" value="ECO:0007669"/>
    <property type="project" value="UniProtKB-SubCell"/>
</dbReference>
<dbReference type="GO" id="GO:0004372">
    <property type="term" value="F:glycine hydroxymethyltransferase activity"/>
    <property type="evidence" value="ECO:0007669"/>
    <property type="project" value="UniProtKB-UniRule"/>
</dbReference>
<dbReference type="GO" id="GO:0030170">
    <property type="term" value="F:pyridoxal phosphate binding"/>
    <property type="evidence" value="ECO:0007669"/>
    <property type="project" value="UniProtKB-UniRule"/>
</dbReference>
<dbReference type="GO" id="GO:0019264">
    <property type="term" value="P:glycine biosynthetic process from serine"/>
    <property type="evidence" value="ECO:0007669"/>
    <property type="project" value="UniProtKB-UniRule"/>
</dbReference>
<dbReference type="GO" id="GO:0035999">
    <property type="term" value="P:tetrahydrofolate interconversion"/>
    <property type="evidence" value="ECO:0007669"/>
    <property type="project" value="UniProtKB-UniRule"/>
</dbReference>
<dbReference type="CDD" id="cd00378">
    <property type="entry name" value="SHMT"/>
    <property type="match status" value="1"/>
</dbReference>
<dbReference type="FunFam" id="3.40.640.10:FF:000001">
    <property type="entry name" value="Serine hydroxymethyltransferase"/>
    <property type="match status" value="1"/>
</dbReference>
<dbReference type="Gene3D" id="3.90.1150.10">
    <property type="entry name" value="Aspartate Aminotransferase, domain 1"/>
    <property type="match status" value="1"/>
</dbReference>
<dbReference type="Gene3D" id="3.40.640.10">
    <property type="entry name" value="Type I PLP-dependent aspartate aminotransferase-like (Major domain)"/>
    <property type="match status" value="1"/>
</dbReference>
<dbReference type="HAMAP" id="MF_00051">
    <property type="entry name" value="SHMT"/>
    <property type="match status" value="1"/>
</dbReference>
<dbReference type="InterPro" id="IPR015424">
    <property type="entry name" value="PyrdxlP-dep_Trfase"/>
</dbReference>
<dbReference type="InterPro" id="IPR015421">
    <property type="entry name" value="PyrdxlP-dep_Trfase_major"/>
</dbReference>
<dbReference type="InterPro" id="IPR015422">
    <property type="entry name" value="PyrdxlP-dep_Trfase_small"/>
</dbReference>
<dbReference type="InterPro" id="IPR001085">
    <property type="entry name" value="Ser_HO-MeTrfase"/>
</dbReference>
<dbReference type="InterPro" id="IPR049943">
    <property type="entry name" value="Ser_HO-MeTrfase-like"/>
</dbReference>
<dbReference type="InterPro" id="IPR019798">
    <property type="entry name" value="Ser_HO-MeTrfase_PLP_BS"/>
</dbReference>
<dbReference type="InterPro" id="IPR039429">
    <property type="entry name" value="SHMT-like_dom"/>
</dbReference>
<dbReference type="NCBIfam" id="NF000586">
    <property type="entry name" value="PRK00011.1"/>
    <property type="match status" value="1"/>
</dbReference>
<dbReference type="PANTHER" id="PTHR11680">
    <property type="entry name" value="SERINE HYDROXYMETHYLTRANSFERASE"/>
    <property type="match status" value="1"/>
</dbReference>
<dbReference type="PANTHER" id="PTHR11680:SF35">
    <property type="entry name" value="SERINE HYDROXYMETHYLTRANSFERASE 1"/>
    <property type="match status" value="1"/>
</dbReference>
<dbReference type="Pfam" id="PF00464">
    <property type="entry name" value="SHMT"/>
    <property type="match status" value="1"/>
</dbReference>
<dbReference type="PIRSF" id="PIRSF000412">
    <property type="entry name" value="SHMT"/>
    <property type="match status" value="1"/>
</dbReference>
<dbReference type="SUPFAM" id="SSF53383">
    <property type="entry name" value="PLP-dependent transferases"/>
    <property type="match status" value="1"/>
</dbReference>
<dbReference type="PROSITE" id="PS00096">
    <property type="entry name" value="SHMT"/>
    <property type="match status" value="1"/>
</dbReference>